<sequence length="565" mass="61073">MMWGSRRRTRSRWGRSGPMTRGMGAVSRAVGTAWRRSLQLRVVALTLGLSLAVILALGFVLTSQVTNRVLDVKVKAAIEQIERARTTVGGIVNGEEARSLDSSLQLARNTLTSKTDSASGAGTAGTFDAVLMVPGDGPRAATTAGPVDQVPASLRGFVKAGQASYQYATVHTDGFSGPALIVGSPASSQVANLELYLIFPLKNEQATIQLVRGTMITGGAVLLVLLAGIALLVSRQVVVPVRSASRIAERFAEGHLSERMPVRGEDDMARLAMSFNDMAESLSRQITQLEEFGNLQRRFTSDVSHELRTPLTTVRMAADLIYDHSADLDPTLARSTELMVNELDRFESLLNDLLEISRHDAGVAELSVEAVDLRSTVQSALSNVGHLAEDAGIELQVELPAEEVIAEVDTRRVERILRNLIANAIDHAEHKPVKIRMAADEDTVAVTVRDYGVGLRPGEEKLVFSRFWRADPSRVRRSGGTGLGLAISIEDARLHQGRLEAWGEPGVGSCFRLTLPLVRGHKVTTSPLPMKPIPQPSPSGGQSPSTGPQHAKDRARQREHAERSL</sequence>
<feature type="chain" id="PRO_0000074808" description="Sensor histidine kinase MtrB">
    <location>
        <begin position="1"/>
        <end position="565"/>
    </location>
</feature>
<feature type="transmembrane region" description="Helical" evidence="2">
    <location>
        <begin position="42"/>
        <end position="62"/>
    </location>
</feature>
<feature type="transmembrane region" description="Helical" evidence="2">
    <location>
        <begin position="213"/>
        <end position="233"/>
    </location>
</feature>
<feature type="domain" description="HAMP" evidence="3">
    <location>
        <begin position="235"/>
        <end position="287"/>
    </location>
</feature>
<feature type="domain" description="Histidine kinase" evidence="4">
    <location>
        <begin position="302"/>
        <end position="519"/>
    </location>
</feature>
<feature type="region of interest" description="Disordered" evidence="5">
    <location>
        <begin position="1"/>
        <end position="21"/>
    </location>
</feature>
<feature type="region of interest" description="Disordered" evidence="5">
    <location>
        <begin position="524"/>
        <end position="565"/>
    </location>
</feature>
<feature type="compositionally biased region" description="Basic residues" evidence="5">
    <location>
        <begin position="1"/>
        <end position="13"/>
    </location>
</feature>
<feature type="compositionally biased region" description="Low complexity" evidence="5">
    <location>
        <begin position="538"/>
        <end position="549"/>
    </location>
</feature>
<feature type="compositionally biased region" description="Basic and acidic residues" evidence="5">
    <location>
        <begin position="550"/>
        <end position="565"/>
    </location>
</feature>
<feature type="modified residue" description="Phosphohistidine; by autocatalysis" evidence="4">
    <location>
        <position position="305"/>
    </location>
</feature>
<name>MTRB_MYCPA</name>
<gene>
    <name type="primary">mtrB</name>
    <name type="ordered locus">MAP_3359c</name>
</gene>
<evidence type="ECO:0000250" key="1"/>
<evidence type="ECO:0000255" key="2"/>
<evidence type="ECO:0000255" key="3">
    <source>
        <dbReference type="PROSITE-ProRule" id="PRU00102"/>
    </source>
</evidence>
<evidence type="ECO:0000255" key="4">
    <source>
        <dbReference type="PROSITE-ProRule" id="PRU00107"/>
    </source>
</evidence>
<evidence type="ECO:0000256" key="5">
    <source>
        <dbReference type="SAM" id="MobiDB-lite"/>
    </source>
</evidence>
<evidence type="ECO:0000305" key="6"/>
<reference key="1">
    <citation type="submission" date="2001-08" db="EMBL/GenBank/DDBJ databases">
        <title>Identification and initial characterization of the mtrAB two-component signal transduction system of Mycobacterium avium subspecies paratuberculosis.</title>
        <authorList>
            <person name="Urbanic K.W."/>
            <person name="Mutharia L.M."/>
        </authorList>
    </citation>
    <scope>NUCLEOTIDE SEQUENCE [GENOMIC DNA]</scope>
    <source>
        <strain>ATCC 19698 / CIP 103963 / DSM 44133 / TMC 807</strain>
    </source>
</reference>
<reference key="2">
    <citation type="journal article" date="2005" name="Proc. Natl. Acad. Sci. U.S.A.">
        <title>The complete genome sequence of Mycobacterium avium subspecies paratuberculosis.</title>
        <authorList>
            <person name="Li L."/>
            <person name="Bannantine J.P."/>
            <person name="Zhang Q."/>
            <person name="Amonsin A."/>
            <person name="May B.J."/>
            <person name="Alt D."/>
            <person name="Banerji N."/>
            <person name="Kanjilal S."/>
            <person name="Kapur V."/>
        </authorList>
    </citation>
    <scope>NUCLEOTIDE SEQUENCE [LARGE SCALE GENOMIC DNA]</scope>
    <source>
        <strain>ATCC BAA-968 / K-10</strain>
    </source>
</reference>
<protein>
    <recommendedName>
        <fullName>Sensor histidine kinase MtrB</fullName>
        <ecNumber>2.7.13.3</ecNumber>
    </recommendedName>
</protein>
<organism>
    <name type="scientific">Mycolicibacterium paratuberculosis (strain ATCC BAA-968 / K-10)</name>
    <name type="common">Mycobacterium paratuberculosis</name>
    <dbReference type="NCBI Taxonomy" id="262316"/>
    <lineage>
        <taxon>Bacteria</taxon>
        <taxon>Bacillati</taxon>
        <taxon>Actinomycetota</taxon>
        <taxon>Actinomycetes</taxon>
        <taxon>Mycobacteriales</taxon>
        <taxon>Mycobacteriaceae</taxon>
        <taxon>Mycobacterium</taxon>
        <taxon>Mycobacterium avium complex (MAC)</taxon>
    </lineage>
</organism>
<comment type="function">
    <text evidence="1">Member of the two-component regulatory system MtrA/MtrB. Seems to function as a membrane-associated protein kinase that phosphorylates MtrA in response to environmental signals (By similarity).</text>
</comment>
<comment type="catalytic activity">
    <reaction>
        <text>ATP + protein L-histidine = ADP + protein N-phospho-L-histidine.</text>
        <dbReference type="EC" id="2.7.13.3"/>
    </reaction>
</comment>
<comment type="subcellular location">
    <subcellularLocation>
        <location evidence="6">Cell membrane</location>
        <topology evidence="6">Multi-pass membrane protein</topology>
    </subcellularLocation>
</comment>
<comment type="sequence caution" evidence="6">
    <conflict type="erroneous initiation">
        <sequence resource="EMBL-CDS" id="AAS05909"/>
    </conflict>
</comment>
<dbReference type="EC" id="2.7.13.3"/>
<dbReference type="EMBL" id="AF410884">
    <property type="protein sequence ID" value="AAL10208.1"/>
    <property type="molecule type" value="Genomic_DNA"/>
</dbReference>
<dbReference type="EMBL" id="AE016958">
    <property type="protein sequence ID" value="AAS05909.1"/>
    <property type="status" value="ALT_INIT"/>
    <property type="molecule type" value="Genomic_DNA"/>
</dbReference>
<dbReference type="SMR" id="Q93CB7"/>
<dbReference type="STRING" id="262316.MAP_3359c"/>
<dbReference type="KEGG" id="mpa:MAP_3359c"/>
<dbReference type="eggNOG" id="COG5000">
    <property type="taxonomic scope" value="Bacteria"/>
</dbReference>
<dbReference type="eggNOG" id="COG5002">
    <property type="taxonomic scope" value="Bacteria"/>
</dbReference>
<dbReference type="HOGENOM" id="CLU_000445_89_18_11"/>
<dbReference type="Proteomes" id="UP000000580">
    <property type="component" value="Chromosome"/>
</dbReference>
<dbReference type="GO" id="GO:0005886">
    <property type="term" value="C:plasma membrane"/>
    <property type="evidence" value="ECO:0007669"/>
    <property type="project" value="UniProtKB-SubCell"/>
</dbReference>
<dbReference type="GO" id="GO:0005524">
    <property type="term" value="F:ATP binding"/>
    <property type="evidence" value="ECO:0007669"/>
    <property type="project" value="UniProtKB-KW"/>
</dbReference>
<dbReference type="GO" id="GO:0000155">
    <property type="term" value="F:phosphorelay sensor kinase activity"/>
    <property type="evidence" value="ECO:0007669"/>
    <property type="project" value="InterPro"/>
</dbReference>
<dbReference type="CDD" id="cd06225">
    <property type="entry name" value="HAMP"/>
    <property type="match status" value="1"/>
</dbReference>
<dbReference type="CDD" id="cd00075">
    <property type="entry name" value="HATPase"/>
    <property type="match status" value="1"/>
</dbReference>
<dbReference type="CDD" id="cd00082">
    <property type="entry name" value="HisKA"/>
    <property type="match status" value="1"/>
</dbReference>
<dbReference type="FunFam" id="1.10.287.130:FF:000010">
    <property type="entry name" value="Two-component sensor histidine kinase"/>
    <property type="match status" value="1"/>
</dbReference>
<dbReference type="FunFam" id="3.30.565.10:FF:000013">
    <property type="entry name" value="Two-component sensor histidine kinase"/>
    <property type="match status" value="1"/>
</dbReference>
<dbReference type="Gene3D" id="1.10.287.130">
    <property type="match status" value="1"/>
</dbReference>
<dbReference type="Gene3D" id="6.10.340.10">
    <property type="match status" value="1"/>
</dbReference>
<dbReference type="Gene3D" id="3.30.565.10">
    <property type="entry name" value="Histidine kinase-like ATPase, C-terminal domain"/>
    <property type="match status" value="1"/>
</dbReference>
<dbReference type="InterPro" id="IPR003660">
    <property type="entry name" value="HAMP_dom"/>
</dbReference>
<dbReference type="InterPro" id="IPR036890">
    <property type="entry name" value="HATPase_C_sf"/>
</dbReference>
<dbReference type="InterPro" id="IPR005467">
    <property type="entry name" value="His_kinase_dom"/>
</dbReference>
<dbReference type="InterPro" id="IPR003661">
    <property type="entry name" value="HisK_dim/P_dom"/>
</dbReference>
<dbReference type="InterPro" id="IPR036097">
    <property type="entry name" value="HisK_dim/P_sf"/>
</dbReference>
<dbReference type="InterPro" id="IPR047669">
    <property type="entry name" value="MtrAB_MtrB"/>
</dbReference>
<dbReference type="InterPro" id="IPR004358">
    <property type="entry name" value="Sig_transdc_His_kin-like_C"/>
</dbReference>
<dbReference type="NCBIfam" id="NF040691">
    <property type="entry name" value="MtrAB_MtrB"/>
    <property type="match status" value="1"/>
</dbReference>
<dbReference type="PANTHER" id="PTHR43547:SF2">
    <property type="entry name" value="HYBRID SIGNAL TRANSDUCTION HISTIDINE KINASE C"/>
    <property type="match status" value="1"/>
</dbReference>
<dbReference type="PANTHER" id="PTHR43547">
    <property type="entry name" value="TWO-COMPONENT HISTIDINE KINASE"/>
    <property type="match status" value="1"/>
</dbReference>
<dbReference type="Pfam" id="PF00672">
    <property type="entry name" value="HAMP"/>
    <property type="match status" value="1"/>
</dbReference>
<dbReference type="Pfam" id="PF02518">
    <property type="entry name" value="HATPase_c"/>
    <property type="match status" value="1"/>
</dbReference>
<dbReference type="Pfam" id="PF00512">
    <property type="entry name" value="HisKA"/>
    <property type="match status" value="1"/>
</dbReference>
<dbReference type="PRINTS" id="PR00344">
    <property type="entry name" value="BCTRLSENSOR"/>
</dbReference>
<dbReference type="SMART" id="SM00304">
    <property type="entry name" value="HAMP"/>
    <property type="match status" value="1"/>
</dbReference>
<dbReference type="SMART" id="SM00387">
    <property type="entry name" value="HATPase_c"/>
    <property type="match status" value="1"/>
</dbReference>
<dbReference type="SMART" id="SM00388">
    <property type="entry name" value="HisKA"/>
    <property type="match status" value="1"/>
</dbReference>
<dbReference type="SUPFAM" id="SSF55874">
    <property type="entry name" value="ATPase domain of HSP90 chaperone/DNA topoisomerase II/histidine kinase"/>
    <property type="match status" value="1"/>
</dbReference>
<dbReference type="SUPFAM" id="SSF158472">
    <property type="entry name" value="HAMP domain-like"/>
    <property type="match status" value="1"/>
</dbReference>
<dbReference type="SUPFAM" id="SSF47384">
    <property type="entry name" value="Homodimeric domain of signal transducing histidine kinase"/>
    <property type="match status" value="1"/>
</dbReference>
<dbReference type="PROSITE" id="PS50885">
    <property type="entry name" value="HAMP"/>
    <property type="match status" value="1"/>
</dbReference>
<dbReference type="PROSITE" id="PS50109">
    <property type="entry name" value="HIS_KIN"/>
    <property type="match status" value="1"/>
</dbReference>
<accession>Q93CB7</accession>
<proteinExistence type="inferred from homology"/>
<keyword id="KW-0067">ATP-binding</keyword>
<keyword id="KW-1003">Cell membrane</keyword>
<keyword id="KW-0418">Kinase</keyword>
<keyword id="KW-0472">Membrane</keyword>
<keyword id="KW-0547">Nucleotide-binding</keyword>
<keyword id="KW-0597">Phosphoprotein</keyword>
<keyword id="KW-1185">Reference proteome</keyword>
<keyword id="KW-0808">Transferase</keyword>
<keyword id="KW-0812">Transmembrane</keyword>
<keyword id="KW-1133">Transmembrane helix</keyword>
<keyword id="KW-0902">Two-component regulatory system</keyword>